<name>GLO2_ECTM1</name>
<reference key="1">
    <citation type="submission" date="2007-04" db="EMBL/GenBank/DDBJ databases">
        <title>Complete sequence of Pseudomonas mendocina ymp.</title>
        <authorList>
            <consortium name="US DOE Joint Genome Institute"/>
            <person name="Copeland A."/>
            <person name="Lucas S."/>
            <person name="Lapidus A."/>
            <person name="Barry K."/>
            <person name="Glavina del Rio T."/>
            <person name="Dalin E."/>
            <person name="Tice H."/>
            <person name="Pitluck S."/>
            <person name="Kiss H."/>
            <person name="Brettin T."/>
            <person name="Detter J.C."/>
            <person name="Bruce D."/>
            <person name="Han C."/>
            <person name="Schmutz J."/>
            <person name="Larimer F."/>
            <person name="Land M."/>
            <person name="Hauser L."/>
            <person name="Kyrpides N."/>
            <person name="Mikhailova N."/>
            <person name="Hersman L."/>
            <person name="Dubois J."/>
            <person name="Maurice P."/>
            <person name="Richardson P."/>
        </authorList>
    </citation>
    <scope>NUCLEOTIDE SEQUENCE [LARGE SCALE GENOMIC DNA]</scope>
    <source>
        <strain>ymp</strain>
    </source>
</reference>
<evidence type="ECO:0000255" key="1">
    <source>
        <dbReference type="HAMAP-Rule" id="MF_01374"/>
    </source>
</evidence>
<protein>
    <recommendedName>
        <fullName evidence="1">Hydroxyacylglutathione hydrolase</fullName>
        <ecNumber evidence="1">3.1.2.6</ecNumber>
    </recommendedName>
    <alternativeName>
        <fullName evidence="1">Glyoxalase II</fullName>
        <shortName evidence="1">Glx II</shortName>
    </alternativeName>
</protein>
<feature type="chain" id="PRO_1000144784" description="Hydroxyacylglutathione hydrolase">
    <location>
        <begin position="1"/>
        <end position="257"/>
    </location>
</feature>
<feature type="binding site" evidence="1">
    <location>
        <position position="56"/>
    </location>
    <ligand>
        <name>Zn(2+)</name>
        <dbReference type="ChEBI" id="CHEBI:29105"/>
        <label>1</label>
    </ligand>
</feature>
<feature type="binding site" evidence="1">
    <location>
        <position position="58"/>
    </location>
    <ligand>
        <name>Zn(2+)</name>
        <dbReference type="ChEBI" id="CHEBI:29105"/>
        <label>1</label>
    </ligand>
</feature>
<feature type="binding site" evidence="1">
    <location>
        <position position="60"/>
    </location>
    <ligand>
        <name>Zn(2+)</name>
        <dbReference type="ChEBI" id="CHEBI:29105"/>
        <label>2</label>
    </ligand>
</feature>
<feature type="binding site" evidence="1">
    <location>
        <position position="61"/>
    </location>
    <ligand>
        <name>Zn(2+)</name>
        <dbReference type="ChEBI" id="CHEBI:29105"/>
        <label>2</label>
    </ligand>
</feature>
<feature type="binding site" evidence="1">
    <location>
        <position position="112"/>
    </location>
    <ligand>
        <name>Zn(2+)</name>
        <dbReference type="ChEBI" id="CHEBI:29105"/>
        <label>1</label>
    </ligand>
</feature>
<feature type="binding site" evidence="1">
    <location>
        <position position="131"/>
    </location>
    <ligand>
        <name>Zn(2+)</name>
        <dbReference type="ChEBI" id="CHEBI:29105"/>
        <label>1</label>
    </ligand>
</feature>
<feature type="binding site" evidence="1">
    <location>
        <position position="131"/>
    </location>
    <ligand>
        <name>Zn(2+)</name>
        <dbReference type="ChEBI" id="CHEBI:29105"/>
        <label>2</label>
    </ligand>
</feature>
<feature type="binding site" evidence="1">
    <location>
        <position position="169"/>
    </location>
    <ligand>
        <name>Zn(2+)</name>
        <dbReference type="ChEBI" id="CHEBI:29105"/>
        <label>2</label>
    </ligand>
</feature>
<organism>
    <name type="scientific">Ectopseudomonas mendocina (strain ymp)</name>
    <name type="common">Pseudomonas mendocina</name>
    <dbReference type="NCBI Taxonomy" id="399739"/>
    <lineage>
        <taxon>Bacteria</taxon>
        <taxon>Pseudomonadati</taxon>
        <taxon>Pseudomonadota</taxon>
        <taxon>Gammaproteobacteria</taxon>
        <taxon>Pseudomonadales</taxon>
        <taxon>Pseudomonadaceae</taxon>
        <taxon>Ectopseudomonas</taxon>
    </lineage>
</organism>
<comment type="function">
    <text evidence="1">Thiolesterase that catalyzes the hydrolysis of S-D-lactoyl-glutathione to form glutathione and D-lactic acid.</text>
</comment>
<comment type="catalytic activity">
    <reaction evidence="1">
        <text>an S-(2-hydroxyacyl)glutathione + H2O = a 2-hydroxy carboxylate + glutathione + H(+)</text>
        <dbReference type="Rhea" id="RHEA:21864"/>
        <dbReference type="ChEBI" id="CHEBI:15377"/>
        <dbReference type="ChEBI" id="CHEBI:15378"/>
        <dbReference type="ChEBI" id="CHEBI:57925"/>
        <dbReference type="ChEBI" id="CHEBI:58896"/>
        <dbReference type="ChEBI" id="CHEBI:71261"/>
        <dbReference type="EC" id="3.1.2.6"/>
    </reaction>
</comment>
<comment type="cofactor">
    <cofactor evidence="1">
        <name>Zn(2+)</name>
        <dbReference type="ChEBI" id="CHEBI:29105"/>
    </cofactor>
    <text evidence="1">Binds 2 Zn(2+) ions per subunit.</text>
</comment>
<comment type="pathway">
    <text evidence="1">Secondary metabolite metabolism; methylglyoxal degradation; (R)-lactate from methylglyoxal: step 2/2.</text>
</comment>
<comment type="subunit">
    <text evidence="1">Monomer.</text>
</comment>
<comment type="similarity">
    <text evidence="1">Belongs to the metallo-beta-lactamase superfamily. Glyoxalase II family.</text>
</comment>
<accession>A4XU09</accession>
<sequence length="257" mass="28284">MIQIDALPAFNDNYIWLLQDPISRRCAVVDPGDAAPVLAWLEAHGDWTLSDILITHHHFDHVGGVEQLKKATGARVAGPAAEKIPARDVDLGDNDLIEVLGLRFQIMAVPGHTLGHIAYYHAEQNLLLCGDTLFAGGCGRLFEGTPQQMHQSLSRLAALPGATRVYCTHEYTLSNLRFAHAVEPHNPDVSARLAEVSRWRDEGRISLPSSIELELATNPFLRTGEPGVIKAAKRNDERSSSEPSAVFASLRAWKDRF</sequence>
<gene>
    <name evidence="1" type="primary">gloB</name>
    <name type="ordered locus">Pmen_2064</name>
</gene>
<proteinExistence type="inferred from homology"/>
<dbReference type="EC" id="3.1.2.6" evidence="1"/>
<dbReference type="EMBL" id="CP000680">
    <property type="protein sequence ID" value="ABP84825.1"/>
    <property type="molecule type" value="Genomic_DNA"/>
</dbReference>
<dbReference type="SMR" id="A4XU09"/>
<dbReference type="STRING" id="399739.Pmen_2064"/>
<dbReference type="KEGG" id="pmy:Pmen_2064"/>
<dbReference type="PATRIC" id="fig|399739.8.peg.2093"/>
<dbReference type="eggNOG" id="COG0491">
    <property type="taxonomic scope" value="Bacteria"/>
</dbReference>
<dbReference type="HOGENOM" id="CLU_030571_4_1_6"/>
<dbReference type="OrthoDB" id="9802248at2"/>
<dbReference type="UniPathway" id="UPA00619">
    <property type="reaction ID" value="UER00676"/>
</dbReference>
<dbReference type="GO" id="GO:0004416">
    <property type="term" value="F:hydroxyacylglutathione hydrolase activity"/>
    <property type="evidence" value="ECO:0007669"/>
    <property type="project" value="UniProtKB-UniRule"/>
</dbReference>
<dbReference type="GO" id="GO:0046872">
    <property type="term" value="F:metal ion binding"/>
    <property type="evidence" value="ECO:0007669"/>
    <property type="project" value="UniProtKB-KW"/>
</dbReference>
<dbReference type="GO" id="GO:0019243">
    <property type="term" value="P:methylglyoxal catabolic process to D-lactate via S-lactoyl-glutathione"/>
    <property type="evidence" value="ECO:0007669"/>
    <property type="project" value="InterPro"/>
</dbReference>
<dbReference type="CDD" id="cd07723">
    <property type="entry name" value="hydroxyacylglutathione_hydrolase_MBL-fold"/>
    <property type="match status" value="1"/>
</dbReference>
<dbReference type="Gene3D" id="3.60.15.10">
    <property type="entry name" value="Ribonuclease Z/Hydroxyacylglutathione hydrolase-like"/>
    <property type="match status" value="1"/>
</dbReference>
<dbReference type="HAMAP" id="MF_01374">
    <property type="entry name" value="Glyoxalase_2"/>
    <property type="match status" value="1"/>
</dbReference>
<dbReference type="InterPro" id="IPR035680">
    <property type="entry name" value="Clx_II_MBL"/>
</dbReference>
<dbReference type="InterPro" id="IPR050110">
    <property type="entry name" value="Glyoxalase_II_hydrolase"/>
</dbReference>
<dbReference type="InterPro" id="IPR032282">
    <property type="entry name" value="HAGH_C"/>
</dbReference>
<dbReference type="InterPro" id="IPR017782">
    <property type="entry name" value="Hydroxyacylglutathione_Hdrlase"/>
</dbReference>
<dbReference type="InterPro" id="IPR001279">
    <property type="entry name" value="Metallo-B-lactamas"/>
</dbReference>
<dbReference type="InterPro" id="IPR036866">
    <property type="entry name" value="RibonucZ/Hydroxyglut_hydro"/>
</dbReference>
<dbReference type="NCBIfam" id="TIGR03413">
    <property type="entry name" value="GSH_gloB"/>
    <property type="match status" value="1"/>
</dbReference>
<dbReference type="PANTHER" id="PTHR43705">
    <property type="entry name" value="HYDROXYACYLGLUTATHIONE HYDROLASE"/>
    <property type="match status" value="1"/>
</dbReference>
<dbReference type="PANTHER" id="PTHR43705:SF1">
    <property type="entry name" value="HYDROXYACYLGLUTATHIONE HYDROLASE GLOB"/>
    <property type="match status" value="1"/>
</dbReference>
<dbReference type="Pfam" id="PF16123">
    <property type="entry name" value="HAGH_C"/>
    <property type="match status" value="1"/>
</dbReference>
<dbReference type="Pfam" id="PF00753">
    <property type="entry name" value="Lactamase_B"/>
    <property type="match status" value="1"/>
</dbReference>
<dbReference type="PIRSF" id="PIRSF005457">
    <property type="entry name" value="Glx"/>
    <property type="match status" value="1"/>
</dbReference>
<dbReference type="SMART" id="SM00849">
    <property type="entry name" value="Lactamase_B"/>
    <property type="match status" value="1"/>
</dbReference>
<dbReference type="SUPFAM" id="SSF56281">
    <property type="entry name" value="Metallo-hydrolase/oxidoreductase"/>
    <property type="match status" value="1"/>
</dbReference>
<keyword id="KW-0378">Hydrolase</keyword>
<keyword id="KW-0479">Metal-binding</keyword>
<keyword id="KW-0862">Zinc</keyword>